<proteinExistence type="inferred from homology"/>
<comment type="catalytic activity">
    <reaction>
        <text>5-amino-6-(5-phospho-D-ribitylamino)uracil + NADP(+) = 5-amino-6-(5-phospho-D-ribosylamino)uracil + NADPH + H(+)</text>
        <dbReference type="Rhea" id="RHEA:17845"/>
        <dbReference type="ChEBI" id="CHEBI:15378"/>
        <dbReference type="ChEBI" id="CHEBI:57783"/>
        <dbReference type="ChEBI" id="CHEBI:58349"/>
        <dbReference type="ChEBI" id="CHEBI:58421"/>
        <dbReference type="ChEBI" id="CHEBI:58453"/>
        <dbReference type="EC" id="1.1.1.193"/>
    </reaction>
</comment>
<comment type="pathway">
    <text>Cofactor biosynthesis; riboflavin biosynthesis; 5-amino-6-(D-ribitylamino)uracil from GTP: step 3/4.</text>
</comment>
<comment type="similarity">
    <text evidence="2">Belongs to the HTP reductase family.</text>
</comment>
<gene>
    <name type="primary">ribD2</name>
    <name type="ordered locus">BU462</name>
</gene>
<evidence type="ECO:0000250" key="1"/>
<evidence type="ECO:0000305" key="2"/>
<dbReference type="EC" id="1.1.1.193"/>
<dbReference type="EMBL" id="BA000003">
    <property type="protein sequence ID" value="BAB13159.1"/>
    <property type="molecule type" value="Genomic_DNA"/>
</dbReference>
<dbReference type="RefSeq" id="NP_240273.1">
    <property type="nucleotide sequence ID" value="NC_002528.1"/>
</dbReference>
<dbReference type="SMR" id="P57534"/>
<dbReference type="STRING" id="563178.BUAP5A_455"/>
<dbReference type="EnsemblBacteria" id="BAB13159">
    <property type="protein sequence ID" value="BAB13159"/>
    <property type="gene ID" value="BAB13159"/>
</dbReference>
<dbReference type="KEGG" id="buc:BU462"/>
<dbReference type="PATRIC" id="fig|107806.10.peg.471"/>
<dbReference type="eggNOG" id="COG1985">
    <property type="taxonomic scope" value="Bacteria"/>
</dbReference>
<dbReference type="HOGENOM" id="CLU_036590_1_2_6"/>
<dbReference type="UniPathway" id="UPA00275">
    <property type="reaction ID" value="UER00402"/>
</dbReference>
<dbReference type="Proteomes" id="UP000001806">
    <property type="component" value="Chromosome"/>
</dbReference>
<dbReference type="GO" id="GO:0008703">
    <property type="term" value="F:5-amino-6-(5-phosphoribosylamino)uracil reductase activity"/>
    <property type="evidence" value="ECO:0007669"/>
    <property type="project" value="UniProtKB-EC"/>
</dbReference>
<dbReference type="GO" id="GO:0008835">
    <property type="term" value="F:diaminohydroxyphosphoribosylaminopyrimidine deaminase activity"/>
    <property type="evidence" value="ECO:0007669"/>
    <property type="project" value="InterPro"/>
</dbReference>
<dbReference type="GO" id="GO:0050661">
    <property type="term" value="F:NADP binding"/>
    <property type="evidence" value="ECO:0007669"/>
    <property type="project" value="InterPro"/>
</dbReference>
<dbReference type="GO" id="GO:0009231">
    <property type="term" value="P:riboflavin biosynthetic process"/>
    <property type="evidence" value="ECO:0007669"/>
    <property type="project" value="UniProtKB-UniPathway"/>
</dbReference>
<dbReference type="Gene3D" id="3.40.430.10">
    <property type="entry name" value="Dihydrofolate Reductase, subunit A"/>
    <property type="match status" value="1"/>
</dbReference>
<dbReference type="InterPro" id="IPR024072">
    <property type="entry name" value="DHFR-like_dom_sf"/>
</dbReference>
<dbReference type="InterPro" id="IPR004794">
    <property type="entry name" value="Eubact_RibD"/>
</dbReference>
<dbReference type="InterPro" id="IPR011549">
    <property type="entry name" value="RibD_C"/>
</dbReference>
<dbReference type="InterPro" id="IPR002734">
    <property type="entry name" value="RibDG_C"/>
</dbReference>
<dbReference type="InterPro" id="IPR050765">
    <property type="entry name" value="Riboflavin_Biosynth_HTPR"/>
</dbReference>
<dbReference type="NCBIfam" id="TIGR00326">
    <property type="entry name" value="eubact_ribD"/>
    <property type="match status" value="1"/>
</dbReference>
<dbReference type="NCBIfam" id="TIGR00227">
    <property type="entry name" value="ribD_Cterm"/>
    <property type="match status" value="1"/>
</dbReference>
<dbReference type="PANTHER" id="PTHR38011:SF7">
    <property type="entry name" value="2,5-DIAMINO-6-RIBOSYLAMINO-4(3H)-PYRIMIDINONE 5'-PHOSPHATE REDUCTASE"/>
    <property type="match status" value="1"/>
</dbReference>
<dbReference type="PANTHER" id="PTHR38011">
    <property type="entry name" value="DIHYDROFOLATE REDUCTASE FAMILY PROTEIN (AFU_ORTHOLOGUE AFUA_8G06820)"/>
    <property type="match status" value="1"/>
</dbReference>
<dbReference type="Pfam" id="PF01872">
    <property type="entry name" value="RibD_C"/>
    <property type="match status" value="1"/>
</dbReference>
<dbReference type="SUPFAM" id="SSF53597">
    <property type="entry name" value="Dihydrofolate reductase-like"/>
    <property type="match status" value="1"/>
</dbReference>
<reference key="1">
    <citation type="journal article" date="2000" name="Nature">
        <title>Genome sequence of the endocellular bacterial symbiont of aphids Buchnera sp. APS.</title>
        <authorList>
            <person name="Shigenobu S."/>
            <person name="Watanabe H."/>
            <person name="Hattori M."/>
            <person name="Sakaki Y."/>
            <person name="Ishikawa H."/>
        </authorList>
    </citation>
    <scope>NUCLEOTIDE SEQUENCE [LARGE SCALE GENOMIC DNA]</scope>
    <source>
        <strain>APS</strain>
    </source>
</reference>
<keyword id="KW-0521">NADP</keyword>
<keyword id="KW-0560">Oxidoreductase</keyword>
<keyword id="KW-1185">Reference proteome</keyword>
<keyword id="KW-0686">Riboflavin biosynthesis</keyword>
<name>RIBD2_BUCAI</name>
<sequence length="207" mass="23942">MRNGDSKWITSKQARQDVQKFRAKSSVILSSSSTILSDNPLLNVRYKELDKKTLSIFPNKIFQHPIRVIIDSKNRVQPSHNIIKTKGKIWLIRLKSDRKIWPKNTTQIIEKDHNKKINIFSLLKFLGQSEINNVWIEAGSTLSGFLLNSYLIDELIIYMAPKILGHEAKPLCMIYEKLKISNSLQFKFKNICQIGPDIRLILSPKKI</sequence>
<accession>P57534</accession>
<feature type="chain" id="PRO_0000171727" description="5-amino-6-(5-phosphoribosylamino)uracil reductase">
    <location>
        <begin position="1"/>
        <end position="207"/>
    </location>
</feature>
<feature type="binding site" evidence="1">
    <location>
        <position position="6"/>
    </location>
    <ligand>
        <name>substrate</name>
    </ligand>
</feature>
<feature type="binding site" evidence="1">
    <location>
        <position position="8"/>
    </location>
    <ligand>
        <name>NADP(+)</name>
        <dbReference type="ChEBI" id="CHEBI:58349"/>
    </ligand>
</feature>
<feature type="binding site" evidence="1">
    <location>
        <position position="22"/>
    </location>
    <ligand>
        <name>substrate</name>
    </ligand>
</feature>
<feature type="binding site" evidence="1">
    <location>
        <position position="38"/>
    </location>
    <ligand>
        <name>NADP(+)</name>
        <dbReference type="ChEBI" id="CHEBI:58349"/>
    </ligand>
</feature>
<feature type="binding site" evidence="1">
    <location>
        <position position="42"/>
    </location>
    <ligand>
        <name>substrate</name>
    </ligand>
</feature>
<feature type="binding site" evidence="1">
    <location>
        <position position="45"/>
    </location>
    <ligand>
        <name>substrate</name>
    </ligand>
</feature>
<feature type="binding site" evidence="1">
    <location>
        <position position="72"/>
    </location>
    <ligand>
        <name>NADP(+)</name>
        <dbReference type="ChEBI" id="CHEBI:58349"/>
    </ligand>
</feature>
<feature type="binding site" evidence="1">
    <location>
        <position position="137"/>
    </location>
    <ligand>
        <name>substrate</name>
    </ligand>
</feature>
<protein>
    <recommendedName>
        <fullName>5-amino-6-(5-phosphoribosylamino)uracil reductase</fullName>
        <ecNumber>1.1.1.193</ecNumber>
    </recommendedName>
    <alternativeName>
        <fullName>HTP reductase</fullName>
    </alternativeName>
</protein>
<organism>
    <name type="scientific">Buchnera aphidicola subsp. Acyrthosiphon pisum (strain APS)</name>
    <name type="common">Acyrthosiphon pisum symbiotic bacterium</name>
    <dbReference type="NCBI Taxonomy" id="107806"/>
    <lineage>
        <taxon>Bacteria</taxon>
        <taxon>Pseudomonadati</taxon>
        <taxon>Pseudomonadota</taxon>
        <taxon>Gammaproteobacteria</taxon>
        <taxon>Enterobacterales</taxon>
        <taxon>Erwiniaceae</taxon>
        <taxon>Buchnera</taxon>
    </lineage>
</organism>